<protein>
    <recommendedName>
        <fullName>4-alpha-glucanotransferase</fullName>
        <ecNumber>2.4.1.25</ecNumber>
    </recommendedName>
    <alternativeName>
        <fullName>Amylomaltase</fullName>
    </alternativeName>
    <alternativeName>
        <fullName>Disproportionating enzyme</fullName>
        <shortName>D-enzyme</shortName>
    </alternativeName>
</protein>
<name>MGTA_THEMA</name>
<accession>P80099</accession>
<evidence type="ECO:0000250" key="1"/>
<evidence type="ECO:0000305" key="2"/>
<evidence type="ECO:0007829" key="3">
    <source>
        <dbReference type="PDB" id="1LWJ"/>
    </source>
</evidence>
<dbReference type="EC" id="2.4.1.25"/>
<dbReference type="EMBL" id="AE000512">
    <property type="protein sequence ID" value="AAD35451.1"/>
    <property type="molecule type" value="Genomic_DNA"/>
</dbReference>
<dbReference type="RefSeq" id="NP_228175.1">
    <property type="nucleotide sequence ID" value="NC_000853.1"/>
</dbReference>
<dbReference type="PDB" id="1LWH">
    <property type="method" value="X-ray"/>
    <property type="resolution" value="2.60 A"/>
    <property type="chains" value="A/B=1-441"/>
</dbReference>
<dbReference type="PDB" id="1LWJ">
    <property type="method" value="X-ray"/>
    <property type="resolution" value="2.50 A"/>
    <property type="chains" value="A/B=1-441"/>
</dbReference>
<dbReference type="PDBsum" id="1LWH"/>
<dbReference type="PDBsum" id="1LWJ"/>
<dbReference type="SMR" id="P80099"/>
<dbReference type="STRING" id="243274.TM_0364"/>
<dbReference type="DrugBank" id="DB04439">
    <property type="generic name" value="Modified Acarbose Pentasaccharide"/>
</dbReference>
<dbReference type="CAZy" id="GH13">
    <property type="family name" value="Glycoside Hydrolase Family 13"/>
</dbReference>
<dbReference type="PaxDb" id="243274-THEMA_02895"/>
<dbReference type="DNASU" id="897323"/>
<dbReference type="EnsemblBacteria" id="AAD35451">
    <property type="protein sequence ID" value="AAD35451"/>
    <property type="gene ID" value="TM_0364"/>
</dbReference>
<dbReference type="KEGG" id="tma:TM0364"/>
<dbReference type="KEGG" id="tmi:THEMA_02895"/>
<dbReference type="KEGG" id="tmm:Tmari_0362"/>
<dbReference type="KEGG" id="tmw:THMA_0372"/>
<dbReference type="eggNOG" id="COG0366">
    <property type="taxonomic scope" value="Bacteria"/>
</dbReference>
<dbReference type="InParanoid" id="P80099"/>
<dbReference type="OrthoDB" id="9805159at2"/>
<dbReference type="BRENDA" id="2.4.1.25">
    <property type="organism ID" value="6331"/>
</dbReference>
<dbReference type="EvolutionaryTrace" id="P80099"/>
<dbReference type="Proteomes" id="UP000008183">
    <property type="component" value="Chromosome"/>
</dbReference>
<dbReference type="GO" id="GO:0005737">
    <property type="term" value="C:cytoplasm"/>
    <property type="evidence" value="ECO:0007669"/>
    <property type="project" value="UniProtKB-SubCell"/>
</dbReference>
<dbReference type="GO" id="GO:0004134">
    <property type="term" value="F:4-alpha-glucanotransferase activity"/>
    <property type="evidence" value="ECO:0007669"/>
    <property type="project" value="UniProtKB-EC"/>
</dbReference>
<dbReference type="GO" id="GO:0004556">
    <property type="term" value="F:alpha-amylase activity"/>
    <property type="evidence" value="ECO:0000318"/>
    <property type="project" value="GO_Central"/>
</dbReference>
<dbReference type="GO" id="GO:0046872">
    <property type="term" value="F:metal ion binding"/>
    <property type="evidence" value="ECO:0007669"/>
    <property type="project" value="UniProtKB-KW"/>
</dbReference>
<dbReference type="GO" id="GO:0009313">
    <property type="term" value="P:oligosaccharide catabolic process"/>
    <property type="evidence" value="ECO:0000318"/>
    <property type="project" value="GO_Central"/>
</dbReference>
<dbReference type="FunFam" id="3.90.400.10:FF:000010">
    <property type="entry name" value="4-alpha-glucanotransferase"/>
    <property type="match status" value="1"/>
</dbReference>
<dbReference type="Gene3D" id="3.20.20.80">
    <property type="entry name" value="Glycosidases"/>
    <property type="match status" value="1"/>
</dbReference>
<dbReference type="Gene3D" id="2.60.40.1180">
    <property type="entry name" value="Golgi alpha-mannosidase II"/>
    <property type="match status" value="1"/>
</dbReference>
<dbReference type="Gene3D" id="3.90.400.10">
    <property type="entry name" value="Oligo-1,6-glucosidase, Domain 2"/>
    <property type="match status" value="1"/>
</dbReference>
<dbReference type="InterPro" id="IPR015261">
    <property type="entry name" value="4-alpha-glucanotransf_C"/>
</dbReference>
<dbReference type="InterPro" id="IPR006046">
    <property type="entry name" value="Alpha_amylase"/>
</dbReference>
<dbReference type="InterPro" id="IPR006047">
    <property type="entry name" value="Glyco_hydro_13_cat_dom"/>
</dbReference>
<dbReference type="InterPro" id="IPR013780">
    <property type="entry name" value="Glyco_hydro_b"/>
</dbReference>
<dbReference type="InterPro" id="IPR017853">
    <property type="entry name" value="Glycoside_hydrolase_SF"/>
</dbReference>
<dbReference type="InterPro" id="IPR045857">
    <property type="entry name" value="O16G_dom_2"/>
</dbReference>
<dbReference type="PANTHER" id="PTHR10357">
    <property type="entry name" value="ALPHA-AMYLASE FAMILY MEMBER"/>
    <property type="match status" value="1"/>
</dbReference>
<dbReference type="PANTHER" id="PTHR10357:SF179">
    <property type="entry name" value="NEUTRAL AND BASIC AMINO ACID TRANSPORT PROTEIN RBAT"/>
    <property type="match status" value="1"/>
</dbReference>
<dbReference type="Pfam" id="PF00128">
    <property type="entry name" value="Alpha-amylase"/>
    <property type="match status" value="1"/>
</dbReference>
<dbReference type="Pfam" id="PF09178">
    <property type="entry name" value="MGTA_C"/>
    <property type="match status" value="1"/>
</dbReference>
<dbReference type="PRINTS" id="PR00110">
    <property type="entry name" value="ALPHAAMYLASE"/>
</dbReference>
<dbReference type="SMART" id="SM00642">
    <property type="entry name" value="Aamy"/>
    <property type="match status" value="1"/>
</dbReference>
<dbReference type="SUPFAM" id="SSF51445">
    <property type="entry name" value="(Trans)glycosidases"/>
    <property type="match status" value="1"/>
</dbReference>
<dbReference type="SUPFAM" id="SSF51011">
    <property type="entry name" value="Glycosyl hydrolase domain"/>
    <property type="match status" value="1"/>
</dbReference>
<gene>
    <name type="primary">mgtA</name>
    <name type="ordered locus">TM_0364</name>
</gene>
<sequence>MIGYQIYVRSFRDGNLDGVGDFRGLKNAVSYLKELGIDFVWLMPVFSSISFHGYDVVDFYSFKAEYGSEREFKEMIEAFHDSGIKVVLDLPIHHTGFLHTWFQKALKGDPHYRDYYVWANKETDLDERREWDGEKIWHPLEDGRFYRGLFGPFSPDLNYDNPQVFDEMKRLVLHLLDMGVDGFRFDAAKHMRDTIEQNVRFWKYFLSDLKGIFLAEIWAEARMVDEHGRIFGYMLNFDTSHCIKEAVWKENTRVLIESIERAVIGKDYLPVNFTSNHDMSRLASFEGGFSKEKIKLSISILFTLPGVPLVFYGDELGMKGVYQKPNTEVVLDPFPWNESMCVEGQTFWKWPAYNGPFSGISVEYQKRDPDSILSHTLGWTRFRKENQWIDRAKLEFLCKEDKFLVYRLYDDQHSLKVFHNLSGEEVVFEGVKMKPYKTEVV</sequence>
<reference key="1">
    <citation type="journal article" date="1999" name="Nature">
        <title>Evidence for lateral gene transfer between Archaea and Bacteria from genome sequence of Thermotoga maritima.</title>
        <authorList>
            <person name="Nelson K.E."/>
            <person name="Clayton R.A."/>
            <person name="Gill S.R."/>
            <person name="Gwinn M.L."/>
            <person name="Dodson R.J."/>
            <person name="Haft D.H."/>
            <person name="Hickey E.K."/>
            <person name="Peterson J.D."/>
            <person name="Nelson W.C."/>
            <person name="Ketchum K.A."/>
            <person name="McDonald L.A."/>
            <person name="Utterback T.R."/>
            <person name="Malek J.A."/>
            <person name="Linher K.D."/>
            <person name="Garrett M.M."/>
            <person name="Stewart A.M."/>
            <person name="Cotton M.D."/>
            <person name="Pratt M.S."/>
            <person name="Phillips C.A."/>
            <person name="Richardson D.L."/>
            <person name="Heidelberg J.F."/>
            <person name="Sutton G.G."/>
            <person name="Fleischmann R.D."/>
            <person name="Eisen J.A."/>
            <person name="White O."/>
            <person name="Salzberg S.L."/>
            <person name="Smith H.O."/>
            <person name="Venter J.C."/>
            <person name="Fraser C.M."/>
        </authorList>
    </citation>
    <scope>NUCLEOTIDE SEQUENCE [LARGE SCALE GENOMIC DNA]</scope>
    <source>
        <strain>ATCC 43589 / DSM 3109 / JCM 10099 / NBRC 100826 / MSB8</strain>
    </source>
</reference>
<reference key="2">
    <citation type="journal article" date="1992" name="Eur. J. Biochem.">
        <title>Purification and characterization of a novel thermostable 4-alpha-glucanotransferase of Thermotoga maritima cloned in Escherichia coli.</title>
        <authorList>
            <person name="Liebl W."/>
            <person name="Feil R."/>
            <person name="Gabelsberger J."/>
            <person name="Kellermann J."/>
            <person name="Schleifer K.-H."/>
        </authorList>
    </citation>
    <scope>PROTEIN SEQUENCE OF 1-23</scope>
    <scope>CHARACTERIZATION</scope>
    <source>
        <strain>ATCC 43589 / DSM 3109 / JCM 10099 / NBRC 100826 / MSB8</strain>
    </source>
</reference>
<reference key="3">
    <citation type="journal article" date="2002" name="J. Mol. Biol.">
        <title>Crystal structure of Thermotoga maritima 4-alpha-glucanotransferase and its acarbose complex: implications for substrate specificity and catalysis.</title>
        <authorList>
            <person name="Roujeinikova A."/>
            <person name="Raasch C."/>
            <person name="Sedelnikova S."/>
            <person name="Liebl W."/>
            <person name="Rice D.W."/>
        </authorList>
    </citation>
    <scope>X-RAY CRYSTALLOGRAPHY (2.6 ANGSTROMS)</scope>
</reference>
<feature type="chain" id="PRO_0000054336" description="4-alpha-glucanotransferase">
    <location>
        <begin position="1"/>
        <end position="441"/>
    </location>
</feature>
<feature type="active site" description="Nucleophile">
    <location>
        <position position="186"/>
    </location>
</feature>
<feature type="active site" description="Proton donor">
    <location>
        <position position="216"/>
    </location>
</feature>
<feature type="binding site">
    <location>
        <position position="13"/>
    </location>
    <ligand>
        <name>Ca(2+)</name>
        <dbReference type="ChEBI" id="CHEBI:29108"/>
    </ligand>
</feature>
<feature type="binding site">
    <location>
        <position position="15"/>
    </location>
    <ligand>
        <name>Ca(2+)</name>
        <dbReference type="ChEBI" id="CHEBI:29108"/>
    </ligand>
</feature>
<feature type="binding site">
    <location>
        <position position="17"/>
    </location>
    <ligand>
        <name>Ca(2+)</name>
        <dbReference type="ChEBI" id="CHEBI:29108"/>
    </ligand>
</feature>
<feature type="binding site">
    <location>
        <position position="19"/>
    </location>
    <ligand>
        <name>Ca(2+)</name>
        <dbReference type="ChEBI" id="CHEBI:29108"/>
    </ligand>
</feature>
<feature type="binding site">
    <location>
        <position position="21"/>
    </location>
    <ligand>
        <name>Ca(2+)</name>
        <dbReference type="ChEBI" id="CHEBI:29108"/>
    </ligand>
</feature>
<feature type="site" description="Transition state stabilizer" evidence="1">
    <location>
        <position position="278"/>
    </location>
</feature>
<feature type="sequence conflict" description="In Ref. 2; AA sequence." evidence="2" ref="2">
    <original>M</original>
    <variation>A</variation>
    <location>
        <position position="1"/>
    </location>
</feature>
<feature type="strand" evidence="3">
    <location>
        <begin position="3"/>
        <end position="6"/>
    </location>
</feature>
<feature type="helix" evidence="3">
    <location>
        <begin position="8"/>
        <end position="11"/>
    </location>
</feature>
<feature type="strand" evidence="3">
    <location>
        <begin position="14"/>
        <end position="19"/>
    </location>
</feature>
<feature type="helix" evidence="3">
    <location>
        <begin position="22"/>
        <end position="27"/>
    </location>
</feature>
<feature type="helix" evidence="3">
    <location>
        <begin position="29"/>
        <end position="34"/>
    </location>
</feature>
<feature type="strand" evidence="3">
    <location>
        <begin position="39"/>
        <end position="42"/>
    </location>
</feature>
<feature type="strand" evidence="3">
    <location>
        <begin position="49"/>
        <end position="52"/>
    </location>
</feature>
<feature type="strand" evidence="3">
    <location>
        <begin position="57"/>
        <end position="62"/>
    </location>
</feature>
<feature type="turn" evidence="3">
    <location>
        <begin position="64"/>
        <end position="66"/>
    </location>
</feature>
<feature type="helix" evidence="3">
    <location>
        <begin position="69"/>
        <end position="81"/>
    </location>
</feature>
<feature type="strand" evidence="3">
    <location>
        <begin position="85"/>
        <end position="90"/>
    </location>
</feature>
<feature type="helix" evidence="3">
    <location>
        <begin position="100"/>
        <end position="106"/>
    </location>
</feature>
<feature type="helix" evidence="3">
    <location>
        <begin position="110"/>
        <end position="113"/>
    </location>
</feature>
<feature type="strand" evidence="3">
    <location>
        <begin position="130"/>
        <end position="132"/>
    </location>
</feature>
<feature type="strand" evidence="3">
    <location>
        <begin position="137"/>
        <end position="139"/>
    </location>
</feature>
<feature type="strand" evidence="3">
    <location>
        <begin position="145"/>
        <end position="147"/>
    </location>
</feature>
<feature type="strand" evidence="3">
    <location>
        <begin position="159"/>
        <end position="161"/>
    </location>
</feature>
<feature type="helix" evidence="3">
    <location>
        <begin position="162"/>
        <end position="176"/>
    </location>
</feature>
<feature type="turn" evidence="3">
    <location>
        <begin position="177"/>
        <end position="179"/>
    </location>
</feature>
<feature type="strand" evidence="3">
    <location>
        <begin position="182"/>
        <end position="185"/>
    </location>
</feature>
<feature type="helix" evidence="3">
    <location>
        <begin position="188"/>
        <end position="190"/>
    </location>
</feature>
<feature type="strand" evidence="3">
    <location>
        <begin position="191"/>
        <end position="194"/>
    </location>
</feature>
<feature type="helix" evidence="3">
    <location>
        <begin position="195"/>
        <end position="205"/>
    </location>
</feature>
<feature type="turn" evidence="3">
    <location>
        <begin position="206"/>
        <end position="208"/>
    </location>
</feature>
<feature type="strand" evidence="3">
    <location>
        <begin position="211"/>
        <end position="215"/>
    </location>
</feature>
<feature type="helix" evidence="3">
    <location>
        <begin position="221"/>
        <end position="231"/>
    </location>
</feature>
<feature type="strand" evidence="3">
    <location>
        <begin position="232"/>
        <end position="235"/>
    </location>
</feature>
<feature type="helix" evidence="3">
    <location>
        <begin position="237"/>
        <end position="248"/>
    </location>
</feature>
<feature type="helix" evidence="3">
    <location>
        <begin position="253"/>
        <end position="262"/>
    </location>
</feature>
<feature type="strand" evidence="3">
    <location>
        <begin position="267"/>
        <end position="274"/>
    </location>
</feature>
<feature type="helix" evidence="3">
    <location>
        <begin position="282"/>
        <end position="284"/>
    </location>
</feature>
<feature type="turn" evidence="3">
    <location>
        <begin position="285"/>
        <end position="287"/>
    </location>
</feature>
<feature type="helix" evidence="3">
    <location>
        <begin position="291"/>
        <end position="302"/>
    </location>
</feature>
<feature type="strand" evidence="3">
    <location>
        <begin position="304"/>
        <end position="311"/>
    </location>
</feature>
<feature type="turn" evidence="3">
    <location>
        <begin position="312"/>
        <end position="317"/>
    </location>
</feature>
<feature type="helix" evidence="3">
    <location>
        <begin position="327"/>
        <end position="330"/>
    </location>
</feature>
<feature type="strand" evidence="3">
    <location>
        <begin position="336"/>
        <end position="340"/>
    </location>
</feature>
<feature type="strand" evidence="3">
    <location>
        <begin position="356"/>
        <end position="359"/>
    </location>
</feature>
<feature type="helix" evidence="3">
    <location>
        <begin position="362"/>
        <end position="365"/>
    </location>
</feature>
<feature type="helix" evidence="3">
    <location>
        <begin position="372"/>
        <end position="385"/>
    </location>
</feature>
<feature type="helix" evidence="3">
    <location>
        <begin position="387"/>
        <end position="389"/>
    </location>
</feature>
<feature type="strand" evidence="3">
    <location>
        <begin position="393"/>
        <end position="399"/>
    </location>
</feature>
<feature type="strand" evidence="3">
    <location>
        <begin position="401"/>
        <end position="410"/>
    </location>
</feature>
<feature type="strand" evidence="3">
    <location>
        <begin position="413"/>
        <end position="420"/>
    </location>
</feature>
<feature type="strand" evidence="3">
    <location>
        <begin position="422"/>
        <end position="424"/>
    </location>
</feature>
<feature type="strand" evidence="3">
    <location>
        <begin position="426"/>
        <end position="428"/>
    </location>
</feature>
<feature type="strand" evidence="3">
    <location>
        <begin position="431"/>
        <end position="433"/>
    </location>
</feature>
<feature type="strand" evidence="3">
    <location>
        <begin position="438"/>
        <end position="440"/>
    </location>
</feature>
<comment type="catalytic activity">
    <reaction>
        <text>Transfers a segment of a (1-&gt;4)-alpha-D-glucan to a new position in an acceptor, which may be glucose or a (1-&gt;4)-alpha-D-glucan.</text>
        <dbReference type="EC" id="2.4.1.25"/>
    </reaction>
</comment>
<comment type="cofactor">
    <cofactor>
        <name>Ca(2+)</name>
        <dbReference type="ChEBI" id="CHEBI:29108"/>
    </cofactor>
    <text>Binds 1 Ca(2+) ion per subunit.</text>
</comment>
<comment type="subunit">
    <text>Monomer.</text>
</comment>
<comment type="subcellular location">
    <subcellularLocation>
        <location>Cytoplasm</location>
    </subcellularLocation>
</comment>
<comment type="similarity">
    <text evidence="2">Belongs to the glycosyl hydrolase 13 family.</text>
</comment>
<proteinExistence type="evidence at protein level"/>
<keyword id="KW-0002">3D-structure</keyword>
<keyword id="KW-0106">Calcium</keyword>
<keyword id="KW-0119">Carbohydrate metabolism</keyword>
<keyword id="KW-0963">Cytoplasm</keyword>
<keyword id="KW-0903">Direct protein sequencing</keyword>
<keyword id="KW-0328">Glycosyltransferase</keyword>
<keyword id="KW-0479">Metal-binding</keyword>
<keyword id="KW-1185">Reference proteome</keyword>
<keyword id="KW-0808">Transferase</keyword>
<organism>
    <name type="scientific">Thermotoga maritima (strain ATCC 43589 / DSM 3109 / JCM 10099 / NBRC 100826 / MSB8)</name>
    <dbReference type="NCBI Taxonomy" id="243274"/>
    <lineage>
        <taxon>Bacteria</taxon>
        <taxon>Thermotogati</taxon>
        <taxon>Thermotogota</taxon>
        <taxon>Thermotogae</taxon>
        <taxon>Thermotogales</taxon>
        <taxon>Thermotogaceae</taxon>
        <taxon>Thermotoga</taxon>
    </lineage>
</organism>